<accession>O28557</accession>
<name>Y1717_ARCFU</name>
<reference key="1">
    <citation type="journal article" date="1997" name="Nature">
        <title>The complete genome sequence of the hyperthermophilic, sulphate-reducing archaeon Archaeoglobus fulgidus.</title>
        <authorList>
            <person name="Klenk H.-P."/>
            <person name="Clayton R.A."/>
            <person name="Tomb J.-F."/>
            <person name="White O."/>
            <person name="Nelson K.E."/>
            <person name="Ketchum K.A."/>
            <person name="Dodson R.J."/>
            <person name="Gwinn M.L."/>
            <person name="Hickey E.K."/>
            <person name="Peterson J.D."/>
            <person name="Richardson D.L."/>
            <person name="Kerlavage A.R."/>
            <person name="Graham D.E."/>
            <person name="Kyrpides N.C."/>
            <person name="Fleischmann R.D."/>
            <person name="Quackenbush J."/>
            <person name="Lee N.H."/>
            <person name="Sutton G.G."/>
            <person name="Gill S.R."/>
            <person name="Kirkness E.F."/>
            <person name="Dougherty B.A."/>
            <person name="McKenney K."/>
            <person name="Adams M.D."/>
            <person name="Loftus B.J."/>
            <person name="Peterson S.N."/>
            <person name="Reich C.I."/>
            <person name="McNeil L.K."/>
            <person name="Badger J.H."/>
            <person name="Glodek A."/>
            <person name="Zhou L."/>
            <person name="Overbeek R."/>
            <person name="Gocayne J.D."/>
            <person name="Weidman J.F."/>
            <person name="McDonald L.A."/>
            <person name="Utterback T.R."/>
            <person name="Cotton M.D."/>
            <person name="Spriggs T."/>
            <person name="Artiach P."/>
            <person name="Kaine B.P."/>
            <person name="Sykes S.M."/>
            <person name="Sadow P.W."/>
            <person name="D'Andrea K.P."/>
            <person name="Bowman C."/>
            <person name="Fujii C."/>
            <person name="Garland S.A."/>
            <person name="Mason T.M."/>
            <person name="Olsen G.J."/>
            <person name="Fraser C.M."/>
            <person name="Smith H.O."/>
            <person name="Woese C.R."/>
            <person name="Venter J.C."/>
        </authorList>
    </citation>
    <scope>NUCLEOTIDE SEQUENCE [LARGE SCALE GENOMIC DNA]</scope>
    <source>
        <strain>ATCC 49558 / DSM 4304 / JCM 9628 / NBRC 100126 / VC-16</strain>
    </source>
</reference>
<dbReference type="EMBL" id="AE000782">
    <property type="protein sequence ID" value="AAB89538.1"/>
    <property type="molecule type" value="Genomic_DNA"/>
</dbReference>
<dbReference type="PIR" id="D69464">
    <property type="entry name" value="D69464"/>
</dbReference>
<dbReference type="STRING" id="224325.AF_1717"/>
<dbReference type="PaxDb" id="224325-AF_1717"/>
<dbReference type="EnsemblBacteria" id="AAB89538">
    <property type="protein sequence ID" value="AAB89538"/>
    <property type="gene ID" value="AF_1717"/>
</dbReference>
<dbReference type="KEGG" id="afu:AF_1717"/>
<dbReference type="eggNOG" id="arCOG02113">
    <property type="taxonomic scope" value="Archaea"/>
</dbReference>
<dbReference type="HOGENOM" id="CLU_152988_0_0_2"/>
<dbReference type="PhylomeDB" id="O28557"/>
<dbReference type="Proteomes" id="UP000002199">
    <property type="component" value="Chromosome"/>
</dbReference>
<dbReference type="InterPro" id="IPR012440">
    <property type="entry name" value="DUF1641"/>
</dbReference>
<dbReference type="Pfam" id="PF07849">
    <property type="entry name" value="DUF1641"/>
    <property type="match status" value="1"/>
</dbReference>
<comment type="similarity">
    <text evidence="1">To B.subtilis YrhD.</text>
</comment>
<sequence>MRRMTDISPDKFAKAAEAIYEIFEKVVENHDEILDAIDKLLILERKGVFDEIVKFSEFKVPFTPDEIREIAERFEMLIKILLSVDERVLKVIKRLIDAFEESMVYEQMGMMEAMKALRDPDVQKAIGFALTLAKNFGKRI</sequence>
<evidence type="ECO:0000305" key="1"/>
<proteinExistence type="predicted"/>
<feature type="chain" id="PRO_0000128050" description="Uncharacterized protein AF_1717">
    <location>
        <begin position="1"/>
        <end position="140"/>
    </location>
</feature>
<protein>
    <recommendedName>
        <fullName>Uncharacterized protein AF_1717</fullName>
    </recommendedName>
</protein>
<keyword id="KW-1185">Reference proteome</keyword>
<organism>
    <name type="scientific">Archaeoglobus fulgidus (strain ATCC 49558 / DSM 4304 / JCM 9628 / NBRC 100126 / VC-16)</name>
    <dbReference type="NCBI Taxonomy" id="224325"/>
    <lineage>
        <taxon>Archaea</taxon>
        <taxon>Methanobacteriati</taxon>
        <taxon>Methanobacteriota</taxon>
        <taxon>Archaeoglobi</taxon>
        <taxon>Archaeoglobales</taxon>
        <taxon>Archaeoglobaceae</taxon>
        <taxon>Archaeoglobus</taxon>
    </lineage>
</organism>
<gene>
    <name type="ordered locus">AF_1717</name>
</gene>